<organism>
    <name type="scientific">Gorilla gorilla gorilla</name>
    <name type="common">Western lowland gorilla</name>
    <dbReference type="NCBI Taxonomy" id="9595"/>
    <lineage>
        <taxon>Eukaryota</taxon>
        <taxon>Metazoa</taxon>
        <taxon>Chordata</taxon>
        <taxon>Craniata</taxon>
        <taxon>Vertebrata</taxon>
        <taxon>Euteleostomi</taxon>
        <taxon>Mammalia</taxon>
        <taxon>Eutheria</taxon>
        <taxon>Euarchontoglires</taxon>
        <taxon>Primates</taxon>
        <taxon>Haplorrhini</taxon>
        <taxon>Catarrhini</taxon>
        <taxon>Hominidae</taxon>
        <taxon>Gorilla</taxon>
    </lineage>
</organism>
<name>HBA_GORGO</name>
<gene>
    <name type="primary">HBA</name>
</gene>
<feature type="chain" id="PRO_0000052642" description="Hemoglobin subunit alpha">
    <location>
        <begin position="1"/>
        <end position="141"/>
    </location>
</feature>
<feature type="peptide" id="PRO_0000455878" description="Hemopressin" evidence="2">
    <location>
        <begin position="95"/>
        <end position="103"/>
    </location>
</feature>
<feature type="domain" description="Globin" evidence="4">
    <location>
        <begin position="1"/>
        <end position="141"/>
    </location>
</feature>
<feature type="binding site" evidence="4">
    <location>
        <position position="58"/>
    </location>
    <ligand>
        <name>O2</name>
        <dbReference type="ChEBI" id="CHEBI:15379"/>
    </ligand>
</feature>
<feature type="binding site" description="proximal binding residue" evidence="4">
    <location>
        <position position="87"/>
    </location>
    <ligand>
        <name>heme b</name>
        <dbReference type="ChEBI" id="CHEBI:60344"/>
    </ligand>
    <ligandPart>
        <name>Fe</name>
        <dbReference type="ChEBI" id="CHEBI:18248"/>
    </ligandPart>
</feature>
<feature type="modified residue" description="Phosphoserine" evidence="3">
    <location>
        <position position="3"/>
    </location>
</feature>
<feature type="modified residue" description="N6-succinyllysine" evidence="1">
    <location>
        <position position="7"/>
    </location>
</feature>
<feature type="modified residue" description="Phosphothreonine" evidence="3">
    <location>
        <position position="8"/>
    </location>
</feature>
<feature type="modified residue" description="N6-succinyllysine" evidence="1">
    <location>
        <position position="11"/>
    </location>
</feature>
<feature type="modified residue" description="N6-acetyllysine; alternate" evidence="3">
    <location>
        <position position="16"/>
    </location>
</feature>
<feature type="modified residue" description="N6-succinyllysine; alternate" evidence="1">
    <location>
        <position position="16"/>
    </location>
</feature>
<feature type="modified residue" description="Phosphotyrosine" evidence="3">
    <location>
        <position position="24"/>
    </location>
</feature>
<feature type="modified residue" description="Phosphoserine" evidence="3">
    <location>
        <position position="35"/>
    </location>
</feature>
<feature type="modified residue" description="N6-succinyllysine" evidence="1">
    <location>
        <position position="40"/>
    </location>
</feature>
<feature type="modified residue" description="Phosphoserine" evidence="3">
    <location>
        <position position="49"/>
    </location>
</feature>
<feature type="modified residue" description="Phosphoserine" evidence="1">
    <location>
        <position position="102"/>
    </location>
</feature>
<feature type="modified residue" description="Phosphothreonine" evidence="1">
    <location>
        <position position="108"/>
    </location>
</feature>
<feature type="modified residue" description="Phosphoserine" evidence="1">
    <location>
        <position position="124"/>
    </location>
</feature>
<feature type="modified residue" description="Phosphoserine" evidence="1">
    <location>
        <position position="131"/>
    </location>
</feature>
<feature type="modified residue" description="Phosphothreonine" evidence="1">
    <location>
        <position position="134"/>
    </location>
</feature>
<feature type="modified residue" description="Phosphothreonine" evidence="1">
    <location>
        <position position="137"/>
    </location>
</feature>
<feature type="modified residue" description="Phosphoserine" evidence="1">
    <location>
        <position position="138"/>
    </location>
</feature>
<keyword id="KW-0007">Acetylation</keyword>
<keyword id="KW-0903">Direct protein sequencing</keyword>
<keyword id="KW-0349">Heme</keyword>
<keyword id="KW-0408">Iron</keyword>
<keyword id="KW-0479">Metal-binding</keyword>
<keyword id="KW-0561">Oxygen transport</keyword>
<keyword id="KW-0597">Phosphoprotein</keyword>
<keyword id="KW-1185">Reference proteome</keyword>
<keyword id="KW-0813">Transport</keyword>
<comment type="function">
    <text>Involved in oxygen transport from the lung to the various peripheral tissues.</text>
</comment>
<comment type="function">
    <molecule>Hemopressin</molecule>
    <text evidence="2">Hemopressin acts as an antagonist peptide of the cannabinoid receptor CNR1. Hemopressin-binding efficiently blocks cannabinoid receptor CNR1 and subsequent signaling.</text>
</comment>
<comment type="subunit">
    <text>Heterotetramer of two alpha chains and two beta chains.</text>
</comment>
<comment type="tissue specificity">
    <text>Red blood cells.</text>
</comment>
<comment type="similarity">
    <text evidence="4">Belongs to the globin family.</text>
</comment>
<sequence>VLSPADKTNVKAAWGKVGAHAGDYGAEALERMFLSFPTTKTYFPHFDLSHGSAQVKGHGKKVADALTNAVAHVDDMPNALSALSDLHAHKLRVDPVNFKLLSHCLLVTLAAHLPAEFTPAVHASLDKFLASVSTVLTSKYR</sequence>
<evidence type="ECO:0000250" key="1">
    <source>
        <dbReference type="UniProtKB" id="P01942"/>
    </source>
</evidence>
<evidence type="ECO:0000250" key="2">
    <source>
        <dbReference type="UniProtKB" id="P01946"/>
    </source>
</evidence>
<evidence type="ECO:0000250" key="3">
    <source>
        <dbReference type="UniProtKB" id="P69905"/>
    </source>
</evidence>
<evidence type="ECO:0000255" key="4">
    <source>
        <dbReference type="PROSITE-ProRule" id="PRU00238"/>
    </source>
</evidence>
<reference key="1">
    <citation type="journal article" date="1961" name="Nature">
        <title>Amino-acid composition of the polypeptide chains of gorilla haemoglobin.</title>
        <authorList>
            <person name="Zuckerkandl E."/>
            <person name="Schroeder W.A."/>
        </authorList>
    </citation>
    <scope>PROTEIN SEQUENCE</scope>
</reference>
<reference key="2">
    <citation type="journal article" date="1973" name="J. Biol. Chem.">
        <title>Hemoglobin alpha-3 chains in apes. Primary structures and the presumptive nature of back mutation in a normally silent gene.</title>
        <authorList>
            <person name="Boyer S.H."/>
            <person name="Noyes A.N."/>
            <person name="Boyer M.L."/>
            <person name="Marr K."/>
        </authorList>
    </citation>
    <scope>PROTEIN SEQUENCE OF 1-31</scope>
</reference>
<accession>P01923</accession>
<proteinExistence type="evidence at protein level"/>
<protein>
    <recommendedName>
        <fullName>Hemoglobin subunit alpha</fullName>
    </recommendedName>
    <alternativeName>
        <fullName>Alpha-globin</fullName>
    </alternativeName>
    <alternativeName>
        <fullName>Hemoglobin alpha chain</fullName>
    </alternativeName>
    <component>
        <recommendedName>
            <fullName evidence="2">Hemopressin</fullName>
        </recommendedName>
    </component>
</protein>
<dbReference type="PIR" id="E93303">
    <property type="entry name" value="HAGO"/>
</dbReference>
<dbReference type="BMRB" id="P01923"/>
<dbReference type="SMR" id="P01923"/>
<dbReference type="FunCoup" id="P01923">
    <property type="interactions" value="18"/>
</dbReference>
<dbReference type="STRING" id="9593.ENSGGOP00000016810"/>
<dbReference type="eggNOG" id="KOG3378">
    <property type="taxonomic scope" value="Eukaryota"/>
</dbReference>
<dbReference type="InParanoid" id="P01923"/>
<dbReference type="Proteomes" id="UP000001519">
    <property type="component" value="Unplaced"/>
</dbReference>
<dbReference type="GO" id="GO:0031838">
    <property type="term" value="C:haptoglobin-hemoglobin complex"/>
    <property type="evidence" value="ECO:0000318"/>
    <property type="project" value="GO_Central"/>
</dbReference>
<dbReference type="GO" id="GO:0005833">
    <property type="term" value="C:hemoglobin complex"/>
    <property type="evidence" value="ECO:0000318"/>
    <property type="project" value="GO_Central"/>
</dbReference>
<dbReference type="GO" id="GO:0020037">
    <property type="term" value="F:heme binding"/>
    <property type="evidence" value="ECO:0000318"/>
    <property type="project" value="GO_Central"/>
</dbReference>
<dbReference type="GO" id="GO:0005506">
    <property type="term" value="F:iron ion binding"/>
    <property type="evidence" value="ECO:0007669"/>
    <property type="project" value="InterPro"/>
</dbReference>
<dbReference type="GO" id="GO:0019825">
    <property type="term" value="F:oxygen binding"/>
    <property type="evidence" value="ECO:0000318"/>
    <property type="project" value="GO_Central"/>
</dbReference>
<dbReference type="GO" id="GO:0005344">
    <property type="term" value="F:oxygen carrier activity"/>
    <property type="evidence" value="ECO:0000318"/>
    <property type="project" value="GO_Central"/>
</dbReference>
<dbReference type="GO" id="GO:0098869">
    <property type="term" value="P:cellular oxidant detoxification"/>
    <property type="evidence" value="ECO:0007669"/>
    <property type="project" value="GOC"/>
</dbReference>
<dbReference type="GO" id="GO:0042744">
    <property type="term" value="P:hydrogen peroxide catabolic process"/>
    <property type="evidence" value="ECO:0000318"/>
    <property type="project" value="GO_Central"/>
</dbReference>
<dbReference type="CDD" id="cd08927">
    <property type="entry name" value="Hb-alpha-like"/>
    <property type="match status" value="1"/>
</dbReference>
<dbReference type="FunFam" id="1.10.490.10:FF:000002">
    <property type="entry name" value="Hemoglobin subunit alpha"/>
    <property type="match status" value="1"/>
</dbReference>
<dbReference type="Gene3D" id="1.10.490.10">
    <property type="entry name" value="Globins"/>
    <property type="match status" value="1"/>
</dbReference>
<dbReference type="InterPro" id="IPR000971">
    <property type="entry name" value="Globin"/>
</dbReference>
<dbReference type="InterPro" id="IPR009050">
    <property type="entry name" value="Globin-like_sf"/>
</dbReference>
<dbReference type="InterPro" id="IPR012292">
    <property type="entry name" value="Globin/Proto"/>
</dbReference>
<dbReference type="InterPro" id="IPR002338">
    <property type="entry name" value="Hemoglobin_a-typ"/>
</dbReference>
<dbReference type="InterPro" id="IPR050056">
    <property type="entry name" value="Hemoglobin_oxygen_transport"/>
</dbReference>
<dbReference type="InterPro" id="IPR002339">
    <property type="entry name" value="Hemoglobin_pi"/>
</dbReference>
<dbReference type="PANTHER" id="PTHR11442">
    <property type="entry name" value="HEMOGLOBIN FAMILY MEMBER"/>
    <property type="match status" value="1"/>
</dbReference>
<dbReference type="PANTHER" id="PTHR11442:SF48">
    <property type="entry name" value="HEMOGLOBIN SUBUNIT ALPHA"/>
    <property type="match status" value="1"/>
</dbReference>
<dbReference type="Pfam" id="PF00042">
    <property type="entry name" value="Globin"/>
    <property type="match status" value="1"/>
</dbReference>
<dbReference type="PRINTS" id="PR00612">
    <property type="entry name" value="ALPHAHAEM"/>
</dbReference>
<dbReference type="PRINTS" id="PR00815">
    <property type="entry name" value="PIHAEM"/>
</dbReference>
<dbReference type="SUPFAM" id="SSF46458">
    <property type="entry name" value="Globin-like"/>
    <property type="match status" value="1"/>
</dbReference>
<dbReference type="PROSITE" id="PS01033">
    <property type="entry name" value="GLOBIN"/>
    <property type="match status" value="1"/>
</dbReference>